<proteinExistence type="inferred from homology"/>
<reference key="1">
    <citation type="journal article" date="2002" name="Nature">
        <title>Sequence and analysis of chromosome 2 of Dictyostelium discoideum.</title>
        <authorList>
            <person name="Gloeckner G."/>
            <person name="Eichinger L."/>
            <person name="Szafranski K."/>
            <person name="Pachebat J.A."/>
            <person name="Bankier A.T."/>
            <person name="Dear P.H."/>
            <person name="Lehmann R."/>
            <person name="Baumgart C."/>
            <person name="Parra G."/>
            <person name="Abril J.F."/>
            <person name="Guigo R."/>
            <person name="Kumpf K."/>
            <person name="Tunggal B."/>
            <person name="Cox E.C."/>
            <person name="Quail M.A."/>
            <person name="Platzer M."/>
            <person name="Rosenthal A."/>
            <person name="Noegel A.A."/>
        </authorList>
    </citation>
    <scope>NUCLEOTIDE SEQUENCE [LARGE SCALE GENOMIC DNA]</scope>
    <source>
        <strain>AX4</strain>
    </source>
</reference>
<reference key="2">
    <citation type="journal article" date="2005" name="Nature">
        <title>The genome of the social amoeba Dictyostelium discoideum.</title>
        <authorList>
            <person name="Eichinger L."/>
            <person name="Pachebat J.A."/>
            <person name="Gloeckner G."/>
            <person name="Rajandream M.A."/>
            <person name="Sucgang R."/>
            <person name="Berriman M."/>
            <person name="Song J."/>
            <person name="Olsen R."/>
            <person name="Szafranski K."/>
            <person name="Xu Q."/>
            <person name="Tunggal B."/>
            <person name="Kummerfeld S."/>
            <person name="Madera M."/>
            <person name="Konfortov B.A."/>
            <person name="Rivero F."/>
            <person name="Bankier A.T."/>
            <person name="Lehmann R."/>
            <person name="Hamlin N."/>
            <person name="Davies R."/>
            <person name="Gaudet P."/>
            <person name="Fey P."/>
            <person name="Pilcher K."/>
            <person name="Chen G."/>
            <person name="Saunders D."/>
            <person name="Sodergren E.J."/>
            <person name="Davis P."/>
            <person name="Kerhornou A."/>
            <person name="Nie X."/>
            <person name="Hall N."/>
            <person name="Anjard C."/>
            <person name="Hemphill L."/>
            <person name="Bason N."/>
            <person name="Farbrother P."/>
            <person name="Desany B."/>
            <person name="Just E."/>
            <person name="Morio T."/>
            <person name="Rost R."/>
            <person name="Churcher C.M."/>
            <person name="Cooper J."/>
            <person name="Haydock S."/>
            <person name="van Driessche N."/>
            <person name="Cronin A."/>
            <person name="Goodhead I."/>
            <person name="Muzny D.M."/>
            <person name="Mourier T."/>
            <person name="Pain A."/>
            <person name="Lu M."/>
            <person name="Harper D."/>
            <person name="Lindsay R."/>
            <person name="Hauser H."/>
            <person name="James K.D."/>
            <person name="Quiles M."/>
            <person name="Madan Babu M."/>
            <person name="Saito T."/>
            <person name="Buchrieser C."/>
            <person name="Wardroper A."/>
            <person name="Felder M."/>
            <person name="Thangavelu M."/>
            <person name="Johnson D."/>
            <person name="Knights A."/>
            <person name="Loulseged H."/>
            <person name="Mungall K.L."/>
            <person name="Oliver K."/>
            <person name="Price C."/>
            <person name="Quail M.A."/>
            <person name="Urushihara H."/>
            <person name="Hernandez J."/>
            <person name="Rabbinowitsch E."/>
            <person name="Steffen D."/>
            <person name="Sanders M."/>
            <person name="Ma J."/>
            <person name="Kohara Y."/>
            <person name="Sharp S."/>
            <person name="Simmonds M.N."/>
            <person name="Spiegler S."/>
            <person name="Tivey A."/>
            <person name="Sugano S."/>
            <person name="White B."/>
            <person name="Walker D."/>
            <person name="Woodward J.R."/>
            <person name="Winckler T."/>
            <person name="Tanaka Y."/>
            <person name="Shaulsky G."/>
            <person name="Schleicher M."/>
            <person name="Weinstock G.M."/>
            <person name="Rosenthal A."/>
            <person name="Cox E.C."/>
            <person name="Chisholm R.L."/>
            <person name="Gibbs R.A."/>
            <person name="Loomis W.F."/>
            <person name="Platzer M."/>
            <person name="Kay R.R."/>
            <person name="Williams J.G."/>
            <person name="Dear P.H."/>
            <person name="Noegel A.A."/>
            <person name="Barrell B.G."/>
            <person name="Kuspa A."/>
        </authorList>
    </citation>
    <scope>NUCLEOTIDE SEQUENCE [LARGE SCALE GENOMIC DNA]</scope>
    <source>
        <strain>AX4</strain>
    </source>
</reference>
<organism>
    <name type="scientific">Dictyostelium discoideum</name>
    <name type="common">Social amoeba</name>
    <dbReference type="NCBI Taxonomy" id="44689"/>
    <lineage>
        <taxon>Eukaryota</taxon>
        <taxon>Amoebozoa</taxon>
        <taxon>Evosea</taxon>
        <taxon>Eumycetozoa</taxon>
        <taxon>Dictyostelia</taxon>
        <taxon>Dictyosteliales</taxon>
        <taxon>Dictyosteliaceae</taxon>
        <taxon>Dictyostelium</taxon>
    </lineage>
</organism>
<comment type="similarity">
    <text evidence="2">Belongs to the nucleosome assembly protein (NAP) family.</text>
</comment>
<gene>
    <name type="primary">set</name>
    <name type="ORF">DDB_G0277369</name>
</gene>
<sequence length="237" mass="27469">MSKHQKKEVEVEFEKDDPKAVYLELFDKDTELKSLSDEIEKLTGEKDLELMKCDKDIYKSAEPLYRERRALLLEIPDFWATIFTNLFLKLGFVDELTMCVDDFFVEDTETEFRLFIDFRENDIISNKQVIITVTTPTTSEELSQEVKISTTPIELKQNKTETEKKNKDSKKSTDDEDEDEDDDEISGFLKFLLNPTKDIATFIVGSVWSNPIDSFCNDDDEDYDGLIASDSEGEEDK</sequence>
<name>SET_DICDI</name>
<accession>Q54ZT0</accession>
<accession>Q76P08</accession>
<keyword id="KW-1185">Reference proteome</keyword>
<dbReference type="EMBL" id="AAFI02000019">
    <property type="protein sequence ID" value="EAL68871.1"/>
    <property type="molecule type" value="Genomic_DNA"/>
</dbReference>
<dbReference type="RefSeq" id="XP_642786.1">
    <property type="nucleotide sequence ID" value="XM_637694.1"/>
</dbReference>
<dbReference type="SMR" id="Q54ZT0"/>
<dbReference type="FunCoup" id="Q54ZT0">
    <property type="interactions" value="6"/>
</dbReference>
<dbReference type="STRING" id="44689.Q54ZT0"/>
<dbReference type="PaxDb" id="44689-DDB0233600"/>
<dbReference type="EnsemblProtists" id="EAL68871">
    <property type="protein sequence ID" value="EAL68871"/>
    <property type="gene ID" value="DDB_G0277369"/>
</dbReference>
<dbReference type="GeneID" id="8620979"/>
<dbReference type="KEGG" id="ddi:DDB_G0277369"/>
<dbReference type="dictyBase" id="DDB_G0277369"/>
<dbReference type="VEuPathDB" id="AmoebaDB:DDB_G0277369"/>
<dbReference type="eggNOG" id="ENOG502RH9P">
    <property type="taxonomic scope" value="Eukaryota"/>
</dbReference>
<dbReference type="HOGENOM" id="CLU_1172507_0_0_1"/>
<dbReference type="InParanoid" id="Q54ZT0"/>
<dbReference type="OMA" id="IDFREND"/>
<dbReference type="PhylomeDB" id="Q54ZT0"/>
<dbReference type="PRO" id="PR:Q54ZT0"/>
<dbReference type="Proteomes" id="UP000002195">
    <property type="component" value="Chromosome 2"/>
</dbReference>
<dbReference type="GO" id="GO:0000785">
    <property type="term" value="C:chromatin"/>
    <property type="evidence" value="ECO:0000318"/>
    <property type="project" value="GO_Central"/>
</dbReference>
<dbReference type="GO" id="GO:0005634">
    <property type="term" value="C:nucleus"/>
    <property type="evidence" value="ECO:0000318"/>
    <property type="project" value="GO_Central"/>
</dbReference>
<dbReference type="GO" id="GO:0003682">
    <property type="term" value="F:chromatin binding"/>
    <property type="evidence" value="ECO:0000318"/>
    <property type="project" value="GO_Central"/>
</dbReference>
<dbReference type="GO" id="GO:0042393">
    <property type="term" value="F:histone binding"/>
    <property type="evidence" value="ECO:0000318"/>
    <property type="project" value="GO_Central"/>
</dbReference>
<dbReference type="GO" id="GO:0006334">
    <property type="term" value="P:nucleosome assembly"/>
    <property type="evidence" value="ECO:0000318"/>
    <property type="project" value="GO_Central"/>
</dbReference>
<dbReference type="Gene3D" id="3.30.1120.90">
    <property type="entry name" value="Nucleosome assembly protein"/>
    <property type="match status" value="1"/>
</dbReference>
<dbReference type="InterPro" id="IPR037231">
    <property type="entry name" value="NAP-like_sf"/>
</dbReference>
<dbReference type="InterPro" id="IPR002164">
    <property type="entry name" value="NAP_family"/>
</dbReference>
<dbReference type="PANTHER" id="PTHR11875">
    <property type="entry name" value="TESTIS-SPECIFIC Y-ENCODED PROTEIN"/>
    <property type="match status" value="1"/>
</dbReference>
<dbReference type="SUPFAM" id="SSF143113">
    <property type="entry name" value="NAP-like"/>
    <property type="match status" value="1"/>
</dbReference>
<protein>
    <recommendedName>
        <fullName>Protein set homolog</fullName>
    </recommendedName>
</protein>
<feature type="chain" id="PRO_0000328299" description="Protein set homolog">
    <location>
        <begin position="1"/>
        <end position="237"/>
    </location>
</feature>
<feature type="region of interest" description="Disordered" evidence="1">
    <location>
        <begin position="141"/>
        <end position="182"/>
    </location>
</feature>
<feature type="region of interest" description="Disordered" evidence="1">
    <location>
        <begin position="214"/>
        <end position="237"/>
    </location>
</feature>
<feature type="compositionally biased region" description="Polar residues" evidence="1">
    <location>
        <begin position="141"/>
        <end position="152"/>
    </location>
</feature>
<feature type="compositionally biased region" description="Basic and acidic residues" evidence="1">
    <location>
        <begin position="156"/>
        <end position="173"/>
    </location>
</feature>
<evidence type="ECO:0000256" key="1">
    <source>
        <dbReference type="SAM" id="MobiDB-lite"/>
    </source>
</evidence>
<evidence type="ECO:0000305" key="2"/>